<dbReference type="EC" id="2.1.1.364" evidence="2 4"/>
<dbReference type="EMBL" id="AY126698">
    <property type="protein sequence ID" value="AAM96825.1"/>
    <property type="molecule type" value="mRNA"/>
</dbReference>
<dbReference type="SMR" id="Q7Z0G7"/>
<dbReference type="GO" id="GO:0005694">
    <property type="term" value="C:chromosome"/>
    <property type="evidence" value="ECO:0007669"/>
    <property type="project" value="UniProtKB-SubCell"/>
</dbReference>
<dbReference type="GO" id="GO:0005634">
    <property type="term" value="C:nucleus"/>
    <property type="evidence" value="ECO:0007669"/>
    <property type="project" value="UniProtKB-SubCell"/>
</dbReference>
<dbReference type="GO" id="GO:0003682">
    <property type="term" value="F:chromatin binding"/>
    <property type="evidence" value="ECO:0007669"/>
    <property type="project" value="TreeGrafter"/>
</dbReference>
<dbReference type="GO" id="GO:0140945">
    <property type="term" value="F:histone H3K4 monomethyltransferase activity"/>
    <property type="evidence" value="ECO:0007669"/>
    <property type="project" value="UniProtKB-EC"/>
</dbReference>
<dbReference type="GO" id="GO:0042054">
    <property type="term" value="F:histone methyltransferase activity"/>
    <property type="evidence" value="ECO:0000250"/>
    <property type="project" value="UniProtKB"/>
</dbReference>
<dbReference type="GO" id="GO:0016279">
    <property type="term" value="F:protein-lysine N-methyltransferase activity"/>
    <property type="evidence" value="ECO:0000250"/>
    <property type="project" value="UniProtKB"/>
</dbReference>
<dbReference type="GO" id="GO:0070828">
    <property type="term" value="P:heterochromatin organization"/>
    <property type="evidence" value="ECO:0007669"/>
    <property type="project" value="TreeGrafter"/>
</dbReference>
<dbReference type="GO" id="GO:0018027">
    <property type="term" value="P:peptidyl-lysine dimethylation"/>
    <property type="evidence" value="ECO:0000250"/>
    <property type="project" value="UniProtKB"/>
</dbReference>
<dbReference type="GO" id="GO:0018026">
    <property type="term" value="P:peptidyl-lysine monomethylation"/>
    <property type="evidence" value="ECO:0000250"/>
    <property type="project" value="UniProtKB"/>
</dbReference>
<dbReference type="GO" id="GO:0006355">
    <property type="term" value="P:regulation of DNA-templated transcription"/>
    <property type="evidence" value="ECO:0007669"/>
    <property type="project" value="InterPro"/>
</dbReference>
<dbReference type="CDD" id="cd10530">
    <property type="entry name" value="SET_SETD7"/>
    <property type="match status" value="1"/>
</dbReference>
<dbReference type="FunFam" id="2.20.110.10:FF:000005">
    <property type="entry name" value="Histone-lysine N-methyltransferase SETD7"/>
    <property type="match status" value="1"/>
</dbReference>
<dbReference type="Gene3D" id="2.20.110.10">
    <property type="entry name" value="Histone H3 K4-specific methyltransferase SET7/9 N-terminal domain"/>
    <property type="match status" value="3"/>
</dbReference>
<dbReference type="Gene3D" id="2.170.270.10">
    <property type="entry name" value="SET domain"/>
    <property type="match status" value="1"/>
</dbReference>
<dbReference type="InterPro" id="IPR017155">
    <property type="entry name" value="Hist-Lys_N-MeTrfase_SETD7"/>
</dbReference>
<dbReference type="InterPro" id="IPR003409">
    <property type="entry name" value="MORN"/>
</dbReference>
<dbReference type="InterPro" id="IPR001214">
    <property type="entry name" value="SET_dom"/>
</dbReference>
<dbReference type="InterPro" id="IPR046341">
    <property type="entry name" value="SET_dom_sf"/>
</dbReference>
<dbReference type="InterPro" id="IPR054533">
    <property type="entry name" value="SETD7_N"/>
</dbReference>
<dbReference type="InterPro" id="IPR044436">
    <property type="entry name" value="SETD7_SET"/>
</dbReference>
<dbReference type="PANTHER" id="PTHR46820">
    <property type="entry name" value="HISTONE-LYSINE N-METHYLTRANSFERASE SETD7"/>
    <property type="match status" value="1"/>
</dbReference>
<dbReference type="PANTHER" id="PTHR46820:SF1">
    <property type="entry name" value="HISTONE-LYSINE N-METHYLTRANSFERASE SETD7"/>
    <property type="match status" value="1"/>
</dbReference>
<dbReference type="Pfam" id="PF02493">
    <property type="entry name" value="MORN"/>
    <property type="match status" value="3"/>
</dbReference>
<dbReference type="Pfam" id="PF00856">
    <property type="entry name" value="SET"/>
    <property type="match status" value="1"/>
</dbReference>
<dbReference type="Pfam" id="PF22648">
    <property type="entry name" value="SET7_N"/>
    <property type="match status" value="1"/>
</dbReference>
<dbReference type="PIRSF" id="PIRSF037249">
    <property type="entry name" value="Histone_Lys_mtfrase_SET"/>
    <property type="match status" value="1"/>
</dbReference>
<dbReference type="SUPFAM" id="SSF82185">
    <property type="entry name" value="Histone H3 K4-specific methyltransferase SET7/9 N-terminal domain"/>
    <property type="match status" value="1"/>
</dbReference>
<dbReference type="SUPFAM" id="SSF82199">
    <property type="entry name" value="SET domain"/>
    <property type="match status" value="1"/>
</dbReference>
<dbReference type="PROSITE" id="PS51577">
    <property type="entry name" value="SAM_MT43_SET7"/>
    <property type="match status" value="1"/>
</dbReference>
<dbReference type="PROSITE" id="PS50280">
    <property type="entry name" value="SET"/>
    <property type="match status" value="1"/>
</dbReference>
<feature type="chain" id="PRO_0000316992" description="Histone-lysine N-methyltransferase SETD7">
    <location>
        <begin position="1"/>
        <end position="386"/>
    </location>
</feature>
<feature type="repeat" description="MORN 1">
    <location>
        <begin position="15"/>
        <end position="38"/>
    </location>
</feature>
<feature type="repeat" description="MORN 2">
    <location>
        <begin position="39"/>
        <end position="61"/>
    </location>
</feature>
<feature type="repeat" description="MORN 3">
    <location>
        <begin position="62"/>
        <end position="84"/>
    </location>
</feature>
<feature type="repeat" description="MORN 4">
    <location>
        <begin position="109"/>
        <end position="131"/>
    </location>
</feature>
<feature type="domain" description="SET" evidence="3">
    <location>
        <begin position="222"/>
        <end position="344"/>
    </location>
</feature>
<feature type="region of interest" description="Disordered" evidence="5">
    <location>
        <begin position="1"/>
        <end position="21"/>
    </location>
</feature>
<feature type="compositionally biased region" description="Acidic residues" evidence="5">
    <location>
        <begin position="1"/>
        <end position="12"/>
    </location>
</feature>
<feature type="binding site" evidence="2">
    <location>
        <begin position="234"/>
        <end position="236"/>
    </location>
    <ligand>
        <name>S-adenosyl-L-methionine</name>
        <dbReference type="ChEBI" id="CHEBI:59789"/>
    </ligand>
</feature>
<feature type="binding site" evidence="2">
    <location>
        <position position="304"/>
    </location>
    <ligand>
        <name>S-adenosyl-L-methionine</name>
        <dbReference type="ChEBI" id="CHEBI:59789"/>
    </ligand>
</feature>
<feature type="binding site" evidence="2">
    <location>
        <position position="305"/>
    </location>
    <ligand>
        <name>S-adenosyl-L-methionine</name>
        <dbReference type="ChEBI" id="CHEBI:59789"/>
    </ligand>
</feature>
<feature type="site" description="Histone H3K4 binding" evidence="2">
    <location>
        <position position="253"/>
    </location>
</feature>
<feature type="site" description="Histone H3K4 binding" evidence="2">
    <location>
        <position position="274"/>
    </location>
</feature>
<feature type="site" description="Histone H3K4 binding" evidence="2">
    <location>
        <position position="325"/>
    </location>
</feature>
<feature type="site" description="Histone H3K4 binding" evidence="2">
    <location>
        <position position="343"/>
    </location>
</feature>
<sequence length="386" mass="42850">MDSSDDEIACDEGDYKGAKDDNDLPHGLGKVKFSSGDEFIGAFEHGIKCGPGKFHFFDDSTLEGNYVDGELHGIGIYTNDDGSITKSTYCEGVMEGPSWEYDPEGNITFRGQYSEGVRCGLCFYYFPDGGSLIGNVNASGDLSADNIAYIYPDRTTALIGSFEEGDMITAKEANVTITGEKGEEISFPTVNSISPDPVYRLDVSTPHVISTRPLVPDPYESELVYAAPSKIPNAGEGLYAKCDVDQDTVMAFYNGVRLKQDEVENRDWSQNSNTISLTDDIAIDVPEEYVSTDNYCASLGHKVNHSFDPNCRYDIYQHPRFGFIKCVRTIRGVSEGDELTVHYTYEHNDGNKTREAEAPEWYKSQLKVFGVDRPAEILENMDEDYC</sequence>
<comment type="function">
    <text evidence="2">Histone methyltransferase that specifically monomethylates 'Lys-4' of histone H3. H3 'Lys-4' methylation represents a specific tag for epigenetic transcriptional activation. Plays a central role in the transcriptional activation of genes. Also has methyltransferase activity toward non-histone proteins.</text>
</comment>
<comment type="catalytic activity">
    <reaction evidence="2 4">
        <text>L-lysyl(4)-[histone H3] + S-adenosyl-L-methionine = N(6)-methyl-L-lysyl(4)-[histone H3] + S-adenosyl-L-homocysteine + H(+)</text>
        <dbReference type="Rhea" id="RHEA:60264"/>
        <dbReference type="Rhea" id="RHEA-COMP:15543"/>
        <dbReference type="Rhea" id="RHEA-COMP:15547"/>
        <dbReference type="ChEBI" id="CHEBI:15378"/>
        <dbReference type="ChEBI" id="CHEBI:29969"/>
        <dbReference type="ChEBI" id="CHEBI:57856"/>
        <dbReference type="ChEBI" id="CHEBI:59789"/>
        <dbReference type="ChEBI" id="CHEBI:61929"/>
        <dbReference type="EC" id="2.1.1.364"/>
    </reaction>
</comment>
<comment type="catalytic activity">
    <reaction evidence="1">
        <text>L-lysyl-[protein] + S-adenosyl-L-methionine = N(6)-methyl-L-lysyl-[protein] + S-adenosyl-L-homocysteine + H(+)</text>
        <dbReference type="Rhea" id="RHEA:51736"/>
        <dbReference type="Rhea" id="RHEA-COMP:9752"/>
        <dbReference type="Rhea" id="RHEA-COMP:13053"/>
        <dbReference type="ChEBI" id="CHEBI:15378"/>
        <dbReference type="ChEBI" id="CHEBI:29969"/>
        <dbReference type="ChEBI" id="CHEBI:57856"/>
        <dbReference type="ChEBI" id="CHEBI:59789"/>
        <dbReference type="ChEBI" id="CHEBI:61929"/>
    </reaction>
    <physiologicalReaction direction="left-to-right" evidence="1">
        <dbReference type="Rhea" id="RHEA:51737"/>
    </physiologicalReaction>
</comment>
<comment type="subcellular location">
    <subcellularLocation>
        <location evidence="2">Nucleus</location>
    </subcellularLocation>
    <subcellularLocation>
        <location evidence="2">Chromosome</location>
    </subcellularLocation>
</comment>
<comment type="domain">
    <text evidence="2">The SET domain is necessary but not sufficient for histone methyltransferase activity.</text>
</comment>
<comment type="similarity">
    <text evidence="4">Belongs to the class V-like SAM-binding methyltransferase superfamily. Histone-lysine methyltransferase family. SET7 subfamily.</text>
</comment>
<gene>
    <name type="primary">setd7</name>
</gene>
<accession>Q7Z0G7</accession>
<name>SETD7_HALRO</name>
<organism>
    <name type="scientific">Halocynthia roretzi</name>
    <name type="common">Sea squirt</name>
    <name type="synonym">Cynthia roretzi</name>
    <dbReference type="NCBI Taxonomy" id="7729"/>
    <lineage>
        <taxon>Eukaryota</taxon>
        <taxon>Metazoa</taxon>
        <taxon>Chordata</taxon>
        <taxon>Tunicata</taxon>
        <taxon>Ascidiacea</taxon>
        <taxon>Stolidobranchia</taxon>
        <taxon>Pyuridae</taxon>
        <taxon>Halocynthia</taxon>
    </lineage>
</organism>
<protein>
    <recommendedName>
        <fullName>Histone-lysine N-methyltransferase SETD7</fullName>
        <ecNumber evidence="2 4">2.1.1.364</ecNumber>
    </recommendedName>
    <alternativeName>
        <fullName>SET domain-containing protein 7</fullName>
    </alternativeName>
</protein>
<evidence type="ECO:0000250" key="1">
    <source>
        <dbReference type="UniProtKB" id="Q8VHL1"/>
    </source>
</evidence>
<evidence type="ECO:0000250" key="2">
    <source>
        <dbReference type="UniProtKB" id="Q8WTS6"/>
    </source>
</evidence>
<evidence type="ECO:0000255" key="3">
    <source>
        <dbReference type="PROSITE-ProRule" id="PRU00190"/>
    </source>
</evidence>
<evidence type="ECO:0000255" key="4">
    <source>
        <dbReference type="PROSITE-ProRule" id="PRU00910"/>
    </source>
</evidence>
<evidence type="ECO:0000256" key="5">
    <source>
        <dbReference type="SAM" id="MobiDB-lite"/>
    </source>
</evidence>
<keyword id="KW-0010">Activator</keyword>
<keyword id="KW-0156">Chromatin regulator</keyword>
<keyword id="KW-0158">Chromosome</keyword>
<keyword id="KW-0489">Methyltransferase</keyword>
<keyword id="KW-0539">Nucleus</keyword>
<keyword id="KW-0677">Repeat</keyword>
<keyword id="KW-0949">S-adenosyl-L-methionine</keyword>
<keyword id="KW-0804">Transcription</keyword>
<keyword id="KW-0805">Transcription regulation</keyword>
<keyword id="KW-0808">Transferase</keyword>
<reference key="1">
    <citation type="submission" date="2002-06" db="EMBL/GenBank/DDBJ databases">
        <title>Ribosomal protein RL29 is a substrate for rat lysine methyltransferase SET7/9.</title>
        <authorList>
            <person name="Williamson N.A."/>
            <person name="Szambelanczyk Orval I."/>
            <person name="Liu J."/>
            <person name="Wettenhall R.E.H."/>
        </authorList>
    </citation>
    <scope>NUCLEOTIDE SEQUENCE [MRNA]</scope>
</reference>
<proteinExistence type="evidence at transcript level"/>